<evidence type="ECO:0000250" key="1"/>
<evidence type="ECO:0000255" key="2"/>
<evidence type="ECO:0000305" key="3"/>
<feature type="signal peptide" evidence="2">
    <location>
        <begin position="1"/>
        <end position="31"/>
    </location>
</feature>
<feature type="chain" id="PRO_0000039318" description="Fusion glycoprotein F0">
    <location>
        <begin position="32"/>
        <end position="553"/>
    </location>
</feature>
<feature type="chain" id="PRO_0000039319" description="Fusion glycoprotein F2">
    <location>
        <begin position="32"/>
        <end position="116"/>
    </location>
</feature>
<feature type="chain" id="PRO_0000039320" description="Fusion glycoprotein F1">
    <location>
        <begin position="117"/>
        <end position="553"/>
    </location>
</feature>
<feature type="topological domain" description="Extracellular" evidence="1">
    <location>
        <begin position="32"/>
        <end position="500"/>
    </location>
</feature>
<feature type="transmembrane region" description="Helical" evidence="1">
    <location>
        <begin position="501"/>
        <end position="521"/>
    </location>
</feature>
<feature type="topological domain" description="Cytoplasmic" evidence="1">
    <location>
        <begin position="522"/>
        <end position="553"/>
    </location>
</feature>
<feature type="region of interest" description="Fusion peptide" evidence="1">
    <location>
        <begin position="117"/>
        <end position="141"/>
    </location>
</feature>
<feature type="coiled-coil region" evidence="2">
    <location>
        <begin position="142"/>
        <end position="170"/>
    </location>
</feature>
<feature type="coiled-coil region" evidence="2">
    <location>
        <begin position="466"/>
        <end position="491"/>
    </location>
</feature>
<feature type="site" description="Cleavage; by host" evidence="1">
    <location>
        <begin position="116"/>
        <end position="117"/>
    </location>
</feature>
<feature type="lipid moiety-binding region" description="S-palmitoyl cysteine; by host" evidence="2">
    <location>
        <position position="523"/>
    </location>
</feature>
<feature type="glycosylation site" description="N-linked (GlcNAc...) asparagine; by host" evidence="2">
    <location>
        <position position="85"/>
    </location>
</feature>
<feature type="glycosylation site" description="N-linked (GlcNAc...) asparagine; by host" evidence="2">
    <location>
        <position position="191"/>
    </location>
</feature>
<feature type="glycosylation site" description="N-linked (GlcNAc...) asparagine; by host" evidence="2">
    <location>
        <position position="366"/>
    </location>
</feature>
<feature type="glycosylation site" description="N-linked (GlcNAc...) asparagine; by host" evidence="2">
    <location>
        <position position="447"/>
    </location>
</feature>
<feature type="glycosylation site" description="N-linked (GlcNAc...) asparagine; by host" evidence="2">
    <location>
        <position position="471"/>
    </location>
</feature>
<feature type="disulfide bond" description="Interchain (between F2 and F1 chains)" evidence="1">
    <location>
        <begin position="76"/>
        <end position="199"/>
    </location>
</feature>
<feature type="disulfide bond" evidence="1">
    <location>
        <begin position="338"/>
        <end position="347"/>
    </location>
</feature>
<feature type="disulfide bond" evidence="1">
    <location>
        <begin position="362"/>
        <end position="370"/>
    </location>
</feature>
<protein>
    <recommendedName>
        <fullName>Fusion glycoprotein F0</fullName>
    </recommendedName>
    <component>
        <recommendedName>
            <fullName>Fusion glycoprotein F2</fullName>
        </recommendedName>
    </component>
    <component>
        <recommendedName>
            <fullName>Fusion glycoprotein F1</fullName>
        </recommendedName>
    </component>
</protein>
<sequence>MGPRPSTKNPTPMMLTVRVALVLSCICPANSIDGRPLAAAGIVVTGDKAVNIYTSSQTGSIIVKLLPNLPKDKEACAKAPLDAYNRTLTTLLTPLGDSIRRIQESVTTSGGRRQKRFIGAIIGGVALGVATAAQITAAAALIQAKQNAANILRLKESIAATNEAVHEVTDGLSQLAVAVGKMQQFVNDQFNKTAQESGCIRIAQQVGVELNLYLTELTTVFGPQITSPALNKLTIQALYNLAGGNMDYLLTKLGVGNNQLSSLIGSGLITGNPILYDSQTQLLGIQVTLPSVGNLNNMRATYLETLSVSTTRGFASALVPKVVTQVGSVIEELDTSYCIETDLDLYCTRIVTFPMSPGIYSCLSGNTSACMYSKTEGALTTPYMTIKGSVIANCKMTTCRCVNPPGIISQNYGEAVSLIDKQSCNVLSLDGITLRLSGEFDATYQKNISIQDSQVIITGNLDISTELGNVNNSISNALNKLEESNSKLDKVNVKLTSTSALITYIVLTIISLVFGILSLVLACYLMYKQKAQQKTLLWLGNNTLDQMRATTKM</sequence>
<comment type="function">
    <text evidence="1">Class I viral fusion protein. Under the current model, the protein has at least 3 conformational states: pre-fusion native state, pre-hairpin intermediate state, and post-fusion hairpin state. During viral and plasma cell membrane fusion, the heptad repeat (HR) regions assume a trimer-of-hairpins structure, positioning the fusion peptide in close proximity to the C-terminal region of the ectodomain. The formation of this structure appears to drive apposition and subsequent fusion of viral and plasma cell membranes. Directs fusion of viral and cellular membranes leading to delivery of the nucleocapsid into the cytoplasm. This fusion is pH independent and occurs directly at the outer cell membrane. The trimer of F1-F2 (F protein) probably interacts with HN at the virion surface. Upon HN binding to its cellular receptor, the hydrophobic fusion peptide is unmasked and interacts with the cellular membrane, inducing the fusion between cell and virion membranes. Later in infection, F proteins expressed at the plasma membrane of infected cells could mediate fusion with adjacent cells to form syncytia, a cytopathic effect that could lead to tissue necrosis (By similarity).</text>
</comment>
<comment type="subunit">
    <text evidence="1">Homotrimer of disulfide-linked F1-F2.</text>
</comment>
<comment type="subcellular location">
    <subcellularLocation>
        <location evidence="1">Virion membrane</location>
        <topology evidence="1">Single-pass type I membrane protein</topology>
    </subcellularLocation>
    <subcellularLocation>
        <location evidence="1">Host cell membrane</location>
        <topology evidence="1">Single-pass membrane protein</topology>
    </subcellularLocation>
</comment>
<comment type="PTM">
    <text evidence="1">The inactive precursor F0 is glycosylated and proteolytically cleaved into F1 and F2 to be functionally active. The cleavage is mediated by cellular proteases during the transport and maturation of the polypeptide (By similarity).</text>
</comment>
<comment type="similarity">
    <text evidence="3">Belongs to the paramyxoviruses fusion glycoprotein family.</text>
</comment>
<organismHost>
    <name type="scientific">Gallus gallus</name>
    <name type="common">Chicken</name>
    <dbReference type="NCBI Taxonomy" id="9031"/>
</organismHost>
<dbReference type="EMBL" id="M23407">
    <property type="protein sequence ID" value="AAA46642.1"/>
    <property type="molecule type" value="Genomic_RNA"/>
</dbReference>
<dbReference type="EMBL" id="M24698">
    <property type="protein sequence ID" value="AAA46649.1"/>
    <property type="molecule type" value="Genomic_RNA"/>
</dbReference>
<dbReference type="PIR" id="G46329">
    <property type="entry name" value="G46329"/>
</dbReference>
<dbReference type="SMR" id="P12571"/>
<dbReference type="GlyCosmos" id="P12571">
    <property type="glycosylation" value="5 sites, No reported glycans"/>
</dbReference>
<dbReference type="GO" id="GO:0020002">
    <property type="term" value="C:host cell plasma membrane"/>
    <property type="evidence" value="ECO:0007669"/>
    <property type="project" value="UniProtKB-SubCell"/>
</dbReference>
<dbReference type="GO" id="GO:0016020">
    <property type="term" value="C:membrane"/>
    <property type="evidence" value="ECO:0007669"/>
    <property type="project" value="UniProtKB-KW"/>
</dbReference>
<dbReference type="GO" id="GO:0019031">
    <property type="term" value="C:viral envelope"/>
    <property type="evidence" value="ECO:0007669"/>
    <property type="project" value="UniProtKB-KW"/>
</dbReference>
<dbReference type="GO" id="GO:0055036">
    <property type="term" value="C:virion membrane"/>
    <property type="evidence" value="ECO:0007669"/>
    <property type="project" value="UniProtKB-SubCell"/>
</dbReference>
<dbReference type="GO" id="GO:0019064">
    <property type="term" value="P:fusion of virus membrane with host plasma membrane"/>
    <property type="evidence" value="ECO:0007669"/>
    <property type="project" value="UniProtKB-KW"/>
</dbReference>
<dbReference type="GO" id="GO:0046718">
    <property type="term" value="P:symbiont entry into host cell"/>
    <property type="evidence" value="ECO:0007669"/>
    <property type="project" value="UniProtKB-KW"/>
</dbReference>
<dbReference type="Gene3D" id="1.10.287.2480">
    <property type="match status" value="1"/>
</dbReference>
<dbReference type="Gene3D" id="6.10.10.110">
    <property type="match status" value="1"/>
</dbReference>
<dbReference type="Gene3D" id="2.60.40.1690">
    <property type="entry name" value="Head and neck region of the ectodomain of NDV fusion glycoprotein"/>
    <property type="match status" value="1"/>
</dbReference>
<dbReference type="Gene3D" id="2.40.490.10">
    <property type="entry name" value="Newcastle disease virus like domain"/>
    <property type="match status" value="1"/>
</dbReference>
<dbReference type="InterPro" id="IPR000776">
    <property type="entry name" value="Fusion_F0_Paramyxovir"/>
</dbReference>
<dbReference type="Pfam" id="PF00523">
    <property type="entry name" value="Fusion_gly"/>
    <property type="match status" value="1"/>
</dbReference>
<dbReference type="SUPFAM" id="SSF69922">
    <property type="entry name" value="Head and neck region of the ectodomain of NDV fusion glycoprotein"/>
    <property type="match status" value="1"/>
</dbReference>
<dbReference type="SUPFAM" id="SSF58069">
    <property type="entry name" value="Virus ectodomain"/>
    <property type="match status" value="1"/>
</dbReference>
<keyword id="KW-0165">Cleavage on pair of basic residues</keyword>
<keyword id="KW-0175">Coiled coil</keyword>
<keyword id="KW-1015">Disulfide bond</keyword>
<keyword id="KW-1169">Fusion of virus membrane with host cell membrane</keyword>
<keyword id="KW-1168">Fusion of virus membrane with host membrane</keyword>
<keyword id="KW-0325">Glycoprotein</keyword>
<keyword id="KW-1032">Host cell membrane</keyword>
<keyword id="KW-1043">Host membrane</keyword>
<keyword id="KW-0449">Lipoprotein</keyword>
<keyword id="KW-0472">Membrane</keyword>
<keyword id="KW-0564">Palmitate</keyword>
<keyword id="KW-0732">Signal</keyword>
<keyword id="KW-0812">Transmembrane</keyword>
<keyword id="KW-1133">Transmembrane helix</keyword>
<keyword id="KW-0261">Viral envelope protein</keyword>
<keyword id="KW-1162">Viral penetration into host cytoplasm</keyword>
<keyword id="KW-0946">Virion</keyword>
<keyword id="KW-1160">Virus entry into host cell</keyword>
<proteinExistence type="inferred from homology"/>
<name>FUS_NDVTG</name>
<reference key="1">
    <citation type="journal article" date="1988" name="Virology">
        <title>Nucleotide sequence of the envelope protein genes of a highly virulent, neurotropic strain of Newcastle disease virus.</title>
        <authorList>
            <person name="Schaper U.M."/>
            <person name="Fuller F.J."/>
            <person name="Ward M.D.W."/>
            <person name="Mehrotra Y."/>
            <person name="Stone H.O."/>
            <person name="Stripp B.R."/>
            <person name="de Buysscher E.V."/>
        </authorList>
    </citation>
    <scope>NUCLEOTIDE SEQUENCE [GENOMIC RNA]</scope>
</reference>
<reference key="2">
    <citation type="journal article" date="1989" name="Virology">
        <title>Newcastle disease virus evolution. II. Lack of gene recombination in generating virulent and avirulent strains.</title>
        <authorList>
            <person name="Toyoda T."/>
            <person name="Sakaguchi T."/>
            <person name="Hirota H."/>
            <person name="Gotoh B."/>
            <person name="Kuma K."/>
            <person name="Miyata T."/>
            <person name="Nagai Y."/>
        </authorList>
    </citation>
    <scope>NUCLEOTIDE SEQUENCE [GENOMIC RNA]</scope>
</reference>
<organism>
    <name type="scientific">Newcastle disease virus (strain Chicken/United States(TX)/GB/48)</name>
    <name type="common">NDV</name>
    <name type="synonym">Newcastle disease virus (strain Texas g.b./48)</name>
    <dbReference type="NCBI Taxonomy" id="11189"/>
    <lineage>
        <taxon>Viruses</taxon>
        <taxon>Riboviria</taxon>
        <taxon>Orthornavirae</taxon>
        <taxon>Negarnaviricota</taxon>
        <taxon>Haploviricotina</taxon>
        <taxon>Monjiviricetes</taxon>
        <taxon>Mononegavirales</taxon>
        <taxon>Paramyxoviridae</taxon>
        <taxon>Avulavirinae</taxon>
        <taxon>Orthoavulavirus</taxon>
        <taxon>Orthoavulavirus javaense</taxon>
        <taxon>Avian paramyxovirus 1</taxon>
    </lineage>
</organism>
<accession>P12571</accession>
<gene>
    <name type="primary">F</name>
</gene>